<organism>
    <name type="scientific">Tupiella akineta</name>
    <name type="common">Green alga</name>
    <name type="synonym">Pseudendoclonium akinetum</name>
    <dbReference type="NCBI Taxonomy" id="160070"/>
    <lineage>
        <taxon>Eukaryota</taxon>
        <taxon>Viridiplantae</taxon>
        <taxon>Chlorophyta</taxon>
        <taxon>Ulvophyceae</taxon>
        <taxon>OUU clade</taxon>
        <taxon>Ulotrichales</taxon>
        <taxon>Tupiellaceae</taxon>
        <taxon>Tupiella</taxon>
    </lineage>
</organism>
<keyword id="KW-0150">Chloroplast</keyword>
<keyword id="KW-0934">Plastid</keyword>
<keyword id="KW-0687">Ribonucleoprotein</keyword>
<keyword id="KW-0689">Ribosomal protein</keyword>
<keyword id="KW-0694">RNA-binding</keyword>
<keyword id="KW-0699">rRNA-binding</keyword>
<reference key="1">
    <citation type="journal article" date="2005" name="Mol. Biol. Evol.">
        <title>The chloroplast genome sequence of the green alga Pseudendoclonium akinetum (Ulvophyceae) reveals unusual structural features and new insights into the branching order of chlorophyte lineages.</title>
        <authorList>
            <person name="Pombert J.-F."/>
            <person name="Otis C."/>
            <person name="Lemieux C."/>
            <person name="Turmel M."/>
        </authorList>
    </citation>
    <scope>NUCLEOTIDE SEQUENCE [LARGE SCALE GENOMIC DNA]</scope>
    <source>
        <strain>UTEX 1912</strain>
    </source>
</reference>
<comment type="function">
    <text evidence="1">With S4 and S5 plays an important role in translational accuracy. Located at the interface of the 30S and 50S subunits (By similarity).</text>
</comment>
<comment type="subunit">
    <text evidence="1">Part of the 30S ribosomal subunit.</text>
</comment>
<comment type="subcellular location">
    <subcellularLocation>
        <location>Plastid</location>
        <location>Chloroplast</location>
    </subcellularLocation>
</comment>
<comment type="similarity">
    <text evidence="2">Belongs to the universal ribosomal protein uS12 family.</text>
</comment>
<protein>
    <recommendedName>
        <fullName evidence="2">Small ribosomal subunit protein uS12c</fullName>
    </recommendedName>
    <alternativeName>
        <fullName>30S ribosomal protein S12, chloroplastic</fullName>
    </alternativeName>
</protein>
<dbReference type="EMBL" id="AY835431">
    <property type="protein sequence ID" value="AAV80644.1"/>
    <property type="molecule type" value="Genomic_DNA"/>
</dbReference>
<dbReference type="RefSeq" id="YP_636220.1">
    <property type="nucleotide sequence ID" value="NC_008114.1"/>
</dbReference>
<dbReference type="SMR" id="Q3ZJ47"/>
<dbReference type="GeneID" id="4108731"/>
<dbReference type="GO" id="GO:0009507">
    <property type="term" value="C:chloroplast"/>
    <property type="evidence" value="ECO:0007669"/>
    <property type="project" value="UniProtKB-SubCell"/>
</dbReference>
<dbReference type="GO" id="GO:0015935">
    <property type="term" value="C:small ribosomal subunit"/>
    <property type="evidence" value="ECO:0007669"/>
    <property type="project" value="InterPro"/>
</dbReference>
<dbReference type="GO" id="GO:0019843">
    <property type="term" value="F:rRNA binding"/>
    <property type="evidence" value="ECO:0007669"/>
    <property type="project" value="UniProtKB-UniRule"/>
</dbReference>
<dbReference type="GO" id="GO:0003735">
    <property type="term" value="F:structural constituent of ribosome"/>
    <property type="evidence" value="ECO:0007669"/>
    <property type="project" value="InterPro"/>
</dbReference>
<dbReference type="GO" id="GO:0006412">
    <property type="term" value="P:translation"/>
    <property type="evidence" value="ECO:0007669"/>
    <property type="project" value="UniProtKB-UniRule"/>
</dbReference>
<dbReference type="CDD" id="cd03368">
    <property type="entry name" value="Ribosomal_S12"/>
    <property type="match status" value="1"/>
</dbReference>
<dbReference type="FunFam" id="2.40.50.140:FF:000001">
    <property type="entry name" value="30S ribosomal protein S12"/>
    <property type="match status" value="1"/>
</dbReference>
<dbReference type="Gene3D" id="2.40.50.140">
    <property type="entry name" value="Nucleic acid-binding proteins"/>
    <property type="match status" value="1"/>
</dbReference>
<dbReference type="HAMAP" id="MF_00403_B">
    <property type="entry name" value="Ribosomal_uS12_B"/>
    <property type="match status" value="1"/>
</dbReference>
<dbReference type="InterPro" id="IPR012340">
    <property type="entry name" value="NA-bd_OB-fold"/>
</dbReference>
<dbReference type="InterPro" id="IPR006032">
    <property type="entry name" value="Ribosomal_uS12"/>
</dbReference>
<dbReference type="InterPro" id="IPR005679">
    <property type="entry name" value="Ribosomal_uS12_bac"/>
</dbReference>
<dbReference type="NCBIfam" id="TIGR00981">
    <property type="entry name" value="rpsL_bact"/>
    <property type="match status" value="1"/>
</dbReference>
<dbReference type="PANTHER" id="PTHR11652">
    <property type="entry name" value="30S RIBOSOMAL PROTEIN S12 FAMILY MEMBER"/>
    <property type="match status" value="1"/>
</dbReference>
<dbReference type="Pfam" id="PF00164">
    <property type="entry name" value="Ribosom_S12_S23"/>
    <property type="match status" value="1"/>
</dbReference>
<dbReference type="PIRSF" id="PIRSF002133">
    <property type="entry name" value="Ribosomal_S12/S23"/>
    <property type="match status" value="1"/>
</dbReference>
<dbReference type="PRINTS" id="PR01034">
    <property type="entry name" value="RIBOSOMALS12"/>
</dbReference>
<dbReference type="SUPFAM" id="SSF50249">
    <property type="entry name" value="Nucleic acid-binding proteins"/>
    <property type="match status" value="1"/>
</dbReference>
<dbReference type="PROSITE" id="PS00055">
    <property type="entry name" value="RIBOSOMAL_S12"/>
    <property type="match status" value="1"/>
</dbReference>
<sequence>MPTIQQLIHSAREKITNKTKSPALKACPQRRGVCTRVYTTTPKKPNSALRKVARIRLTTGFEVTAYIPGVGHTLQEHSVVLVRGGRVKDLPGVRYHIVRGTLDTAGVKGRLKSRSKYGVKKPKKK</sequence>
<feature type="chain" id="PRO_0000276627" description="Small ribosomal subunit protein uS12c">
    <location>
        <begin position="1"/>
        <end position="125"/>
    </location>
</feature>
<gene>
    <name type="primary">rps12</name>
</gene>
<evidence type="ECO:0000250" key="1"/>
<evidence type="ECO:0000305" key="2"/>
<proteinExistence type="inferred from homology"/>
<name>RR12_TUPAK</name>
<geneLocation type="chloroplast"/>
<accession>Q3ZJ47</accession>